<name>ESXU_MYCTU</name>
<proteinExistence type="evidence at protein level"/>
<gene>
    <name evidence="3" type="primary">esxU</name>
    <name evidence="6" type="ordered locus">Rv3445c</name>
</gene>
<reference key="1">
    <citation type="journal article" date="1998" name="Nature">
        <title>Deciphering the biology of Mycobacterium tuberculosis from the complete genome sequence.</title>
        <authorList>
            <person name="Cole S.T."/>
            <person name="Brosch R."/>
            <person name="Parkhill J."/>
            <person name="Garnier T."/>
            <person name="Churcher C.M."/>
            <person name="Harris D.E."/>
            <person name="Gordon S.V."/>
            <person name="Eiglmeier K."/>
            <person name="Gas S."/>
            <person name="Barry C.E. III"/>
            <person name="Tekaia F."/>
            <person name="Badcock K."/>
            <person name="Basham D."/>
            <person name="Brown D."/>
            <person name="Chillingworth T."/>
            <person name="Connor R."/>
            <person name="Davies R.M."/>
            <person name="Devlin K."/>
            <person name="Feltwell T."/>
            <person name="Gentles S."/>
            <person name="Hamlin N."/>
            <person name="Holroyd S."/>
            <person name="Hornsby T."/>
            <person name="Jagels K."/>
            <person name="Krogh A."/>
            <person name="McLean J."/>
            <person name="Moule S."/>
            <person name="Murphy L.D."/>
            <person name="Oliver S."/>
            <person name="Osborne J."/>
            <person name="Quail M.A."/>
            <person name="Rajandream M.A."/>
            <person name="Rogers J."/>
            <person name="Rutter S."/>
            <person name="Seeger K."/>
            <person name="Skelton S."/>
            <person name="Squares S."/>
            <person name="Squares R."/>
            <person name="Sulston J.E."/>
            <person name="Taylor K."/>
            <person name="Whitehead S."/>
            <person name="Barrell B.G."/>
        </authorList>
    </citation>
    <scope>NUCLEOTIDE SEQUENCE [LARGE SCALE GENOMIC DNA]</scope>
    <source>
        <strain>ATCC 25618 / H37Rv</strain>
    </source>
</reference>
<reference key="2">
    <citation type="journal article" date="2009" name="PLoS Pathog.">
        <title>Systematic genetic nomenclature for type VII secretion systems.</title>
        <authorList>
            <person name="Bitter W."/>
            <person name="Houben E.N."/>
            <person name="Bottai D."/>
            <person name="Brodin P."/>
            <person name="Brown E.J."/>
            <person name="Cox J.S."/>
            <person name="Derbyshire K."/>
            <person name="Fortune S.M."/>
            <person name="Gao L.Y."/>
            <person name="Liu J."/>
            <person name="Gey van Pittius N.C."/>
            <person name="Pym A.S."/>
            <person name="Rubin E.J."/>
            <person name="Sherman D.R."/>
            <person name="Cole S.T."/>
            <person name="Brosch R."/>
        </authorList>
    </citation>
    <scope>NOMENCLATURE</scope>
</reference>
<reference key="3">
    <citation type="journal article" date="2010" name="FEBS Lett.">
        <title>Stoichiometric protein complex formation and over-expression using the prokaryotic native operon structure.</title>
        <authorList>
            <person name="Poulsen C."/>
            <person name="Holton S."/>
            <person name="Geerlof A."/>
            <person name="Wilmanns M."/>
            <person name="Song Y.H."/>
        </authorList>
    </citation>
    <scope>SUBUNIT</scope>
    <source>
        <strain>ATCC 25618 / H37Rv</strain>
    </source>
</reference>
<reference key="4">
    <citation type="journal article" date="2018" name="Tuberculosis">
        <title>Biophysical and immunological characterization of the ESX-4 system ESAT-6 family proteins Rv3444c and Rv3445c from Mycobacterium tuberculosis H37Rv.</title>
        <authorList>
            <person name="Pandey H."/>
            <person name="Fatma F."/>
            <person name="Yabaji S.M."/>
            <person name="Kumari M."/>
            <person name="Tripathi S."/>
            <person name="Srivastava K."/>
            <person name="Tripathi D.K."/>
            <person name="Kant S."/>
            <person name="Srivastava K.K."/>
            <person name="Arora A."/>
        </authorList>
    </citation>
    <scope>SUBUNIT</scope>
    <scope>INTERACTION WITH ESXT</scope>
    <scope>DEVELOPMENTAL STAGE</scope>
    <scope>HUMORAL RESPONSE</scope>
    <source>
        <strain>H37Rv</strain>
    </source>
</reference>
<dbReference type="EMBL" id="AL123456">
    <property type="protein sequence ID" value="CCP46267.1"/>
    <property type="molecule type" value="Genomic_DNA"/>
</dbReference>
<dbReference type="RefSeq" id="NP_217962.2">
    <property type="nucleotide sequence ID" value="NC_000962.3"/>
</dbReference>
<dbReference type="RefSeq" id="WP_003900060.1">
    <property type="nucleotide sequence ID" value="NZ_NVQJ01000065.1"/>
</dbReference>
<dbReference type="SMR" id="I6Y3I6"/>
<dbReference type="STRING" id="83332.Rv3445c"/>
<dbReference type="PaxDb" id="83332-Rv3445c"/>
<dbReference type="GeneID" id="45427435"/>
<dbReference type="GeneID" id="887585"/>
<dbReference type="KEGG" id="mtu:Rv3445c"/>
<dbReference type="KEGG" id="mtv:RVBD_3445c"/>
<dbReference type="PATRIC" id="fig|83332.111.peg.3840"/>
<dbReference type="TubercuList" id="Rv3445c"/>
<dbReference type="eggNOG" id="COG4842">
    <property type="taxonomic scope" value="Bacteria"/>
</dbReference>
<dbReference type="HOGENOM" id="CLU_165460_0_0_11"/>
<dbReference type="InParanoid" id="I6Y3I6"/>
<dbReference type="OrthoDB" id="4474955at2"/>
<dbReference type="Proteomes" id="UP000001584">
    <property type="component" value="Chromosome"/>
</dbReference>
<dbReference type="GO" id="GO:0005576">
    <property type="term" value="C:extracellular region"/>
    <property type="evidence" value="ECO:0007669"/>
    <property type="project" value="UniProtKB-SubCell"/>
</dbReference>
<dbReference type="Gene3D" id="1.10.287.1060">
    <property type="entry name" value="ESAT-6-like"/>
    <property type="match status" value="1"/>
</dbReference>
<dbReference type="InterPro" id="IPR036689">
    <property type="entry name" value="ESAT-6-like_sf"/>
</dbReference>
<dbReference type="InterPro" id="IPR010310">
    <property type="entry name" value="T7SS_ESAT-6-like"/>
</dbReference>
<dbReference type="Pfam" id="PF06013">
    <property type="entry name" value="WXG100"/>
    <property type="match status" value="1"/>
</dbReference>
<dbReference type="SUPFAM" id="SSF140453">
    <property type="entry name" value="EsxAB dimer-like"/>
    <property type="match status" value="1"/>
</dbReference>
<evidence type="ECO:0000269" key="1">
    <source>
    </source>
</evidence>
<evidence type="ECO:0000269" key="2">
    <source>
    </source>
</evidence>
<evidence type="ECO:0000303" key="3">
    <source>
    </source>
</evidence>
<evidence type="ECO:0000305" key="4"/>
<evidence type="ECO:0000305" key="5">
    <source>
    </source>
</evidence>
<evidence type="ECO:0000312" key="6">
    <source>
        <dbReference type="EMBL" id="CCP46267.1"/>
    </source>
</evidence>
<keyword id="KW-1185">Reference proteome</keyword>
<keyword id="KW-0964">Secreted</keyword>
<keyword id="KW-0843">Virulence</keyword>
<accession>I6Y3I6</accession>
<accession>L0TE56</accession>
<organism>
    <name type="scientific">Mycobacterium tuberculosis (strain ATCC 25618 / H37Rv)</name>
    <dbReference type="NCBI Taxonomy" id="83332"/>
    <lineage>
        <taxon>Bacteria</taxon>
        <taxon>Bacillati</taxon>
        <taxon>Actinomycetota</taxon>
        <taxon>Actinomycetes</taxon>
        <taxon>Mycobacteriales</taxon>
        <taxon>Mycobacteriaceae</taxon>
        <taxon>Mycobacterium</taxon>
        <taxon>Mycobacterium tuberculosis complex</taxon>
    </lineage>
</organism>
<comment type="subunit">
    <text evidence="1 2">Forms a tight 1:1 complex with EsxT (PubMed:20085764, PubMed:29559126). Complex formation results in induction of alpha-helical conformation and stability against chemical denaturation (PubMed:29559126).</text>
</comment>
<comment type="subcellular location">
    <subcellularLocation>
        <location evidence="5">Secreted</location>
    </subcellularLocation>
    <text evidence="5">Probably secreted via the ESX-4 / type VII secretion system (T7SS).</text>
</comment>
<comment type="developmental stage">
    <text evidence="2">Actively produced during the active phase of tuberculosis.</text>
</comment>
<comment type="miscellaneous">
    <text evidence="2">Elicits strong humoral responses. Induces significant lymphocyte proliferation and up-regulates the induction of TNF-alpha and IL-6 in tuberculosis patients.</text>
</comment>
<comment type="similarity">
    <text evidence="5">Belongs to the WXG100 family. CFP-10 subfamily.</text>
</comment>
<protein>
    <recommendedName>
        <fullName evidence="4">ESAT-6-like protein EsxU</fullName>
    </recommendedName>
</protein>
<sequence>MSTPNTLNADFDLMRSVAGITDARNEEIRAMLQAFIGRMSGVPPSVWGGLAAARFQDVVDRWNAESTRLYHVLHAIADTIRHNEAALREAGQIHARHIAAAGGDL</sequence>
<feature type="chain" id="PRO_0000436935" description="ESAT-6-like protein EsxU">
    <location>
        <begin position="1"/>
        <end position="105"/>
    </location>
</feature>